<evidence type="ECO:0000250" key="1"/>
<evidence type="ECO:0000255" key="2"/>
<evidence type="ECO:0000269" key="3">
    <source>
    </source>
</evidence>
<evidence type="ECO:0000269" key="4">
    <source>
    </source>
</evidence>
<evidence type="ECO:0000269" key="5">
    <source>
    </source>
</evidence>
<evidence type="ECO:0000303" key="6">
    <source>
    </source>
</evidence>
<evidence type="ECO:0000305" key="7"/>
<proteinExistence type="evidence at protein level"/>
<organism>
    <name type="scientific">Mus musculus</name>
    <name type="common">Mouse</name>
    <dbReference type="NCBI Taxonomy" id="10090"/>
    <lineage>
        <taxon>Eukaryota</taxon>
        <taxon>Metazoa</taxon>
        <taxon>Chordata</taxon>
        <taxon>Craniata</taxon>
        <taxon>Vertebrata</taxon>
        <taxon>Euteleostomi</taxon>
        <taxon>Mammalia</taxon>
        <taxon>Eutheria</taxon>
        <taxon>Euarchontoglires</taxon>
        <taxon>Glires</taxon>
        <taxon>Rodentia</taxon>
        <taxon>Myomorpha</taxon>
        <taxon>Muroidea</taxon>
        <taxon>Muridae</taxon>
        <taxon>Murinae</taxon>
        <taxon>Mus</taxon>
        <taxon>Mus</taxon>
    </lineage>
</organism>
<sequence length="1043" mass="120189">MKTGCAAGSPGNEWIFFSSDERNTRSRKTMSNRALQRSAVLSAFVLLRAVTGFSGDGKAIWDKKQYVSPVNPSQLFLYDTFPKNFSWGVGTGAFQVEGSWKTDGRGPSIWDRYVYSHLRGVNGTDRSTDSYIFLEKDLLALDFLGVSFYQFSISWPRLFPNGTVAAVNAQGLRYYRALLDSLVLRNIEPIVTLYHWDLPLTLQEEYGGWKNATMIDLFNDYATYCFQTFGDRVKYWITIHNPYLVAWHGFGTGMHAPGEKGNLTAVYTVGHNLIKAHSKVWHNYDKNFRPHQKGWLSITLGSHWIEPNRTDNMEDVINCQHSMSSVLGWFANPIHGDGDYPEFMKTGAMIPEFSEAEKEEVRGTADFFAFSFGPNNFRPSNTVVKMGQNVSLNLRQVLNWIKLEYDDPQILISENGWFTDSYIKTEDTTAIYMMKNFLNQVLQAIKFDEIRVFGYTAWTLLDGFEWQDAYTTRRGLFYVDFNSEQKERKPKSSAHYYKQIIQDNGFPLKESTPDMKGRFPCDFSWGVTESVLKPEFTVSSPQFTDPHLYVWNVTGNRLLYRVEGVRLKTRPSQCTDYVSIKKRVEMLAKMKVTHYQFALDWTSILPTGNLSKVNRQVLRYYRCVVSEGLKLGVFPMVTLYHPTHSHLGLPLPLLSSGGWLNMNTAKAFQDYAELCFRELGDLVKLWITINEPNRLSDMYNRTSNDTYRAAHNLMIAHAQVWHLYDRQYRPVQHGAVSLSLHCDWAEPANPFVDSHWKAAERFLQFEIAWFADPLFKTGDYPSVMKEYIASKNQRGLSSSVLPRFTAKESRLVKGTVDFYALNHFTTRFVIHKQLNTNRSVADRDVQFLQDITRLSSPSRLAVTPWGVRKLLAWIRRNYRDRDIYITANGIDDLALEDDQIRKYYLEKYVQEALKAYLIDKVKIKGYYAFKLTEEKSKPRFGFFTSDFRAKSSVQFYSKLISSSGLPAENRSPACGQPAEDTDCTICSFLVEKKPLIFFGCCFISTLAVLLSITVFHHQKRRKFQKARNLQNIPLKKGHSRVFS</sequence>
<feature type="chain" id="PRO_0000063906" description="Beta-klotho">
    <location>
        <begin position="1"/>
        <end position="1043"/>
    </location>
</feature>
<feature type="topological domain" description="Extracellular" evidence="2">
    <location>
        <begin position="1"/>
        <end position="994"/>
    </location>
</feature>
<feature type="transmembrane region" description="Helical" evidence="2">
    <location>
        <begin position="995"/>
        <end position="1015"/>
    </location>
</feature>
<feature type="topological domain" description="Cytoplasmic" evidence="2">
    <location>
        <begin position="1016"/>
        <end position="1043"/>
    </location>
</feature>
<feature type="region of interest" description="Glycosyl hydrolase-1 1">
    <location>
        <begin position="77"/>
        <end position="506"/>
    </location>
</feature>
<feature type="region of interest" description="Glycosyl hydrolase-1 2">
    <location>
        <begin position="515"/>
        <end position="965"/>
    </location>
</feature>
<feature type="glycosylation site" description="N-linked (GlcNAc...) asparagine" evidence="2">
    <location>
        <position position="84"/>
    </location>
</feature>
<feature type="glycosylation site" description="N-linked (GlcNAc...) asparagine" evidence="2">
    <location>
        <position position="122"/>
    </location>
</feature>
<feature type="glycosylation site" description="N-linked (GlcNAc...) asparagine" evidence="2">
    <location>
        <position position="161"/>
    </location>
</feature>
<feature type="glycosylation site" description="N-linked (GlcNAc...) asparagine" evidence="2">
    <location>
        <position position="211"/>
    </location>
</feature>
<feature type="glycosylation site" description="N-linked (GlcNAc...) asparagine" evidence="2">
    <location>
        <position position="262"/>
    </location>
</feature>
<feature type="glycosylation site" description="N-linked (GlcNAc...) asparagine" evidence="2">
    <location>
        <position position="308"/>
    </location>
</feature>
<feature type="glycosylation site" description="N-linked (GlcNAc...) asparagine" evidence="2">
    <location>
        <position position="389"/>
    </location>
</feature>
<feature type="glycosylation site" description="N-linked (GlcNAc...) asparagine" evidence="2">
    <location>
        <position position="552"/>
    </location>
</feature>
<feature type="glycosylation site" description="N-linked (GlcNAc...) asparagine" evidence="2">
    <location>
        <position position="609"/>
    </location>
</feature>
<feature type="glycosylation site" description="N-linked (GlcNAc...) asparagine" evidence="2">
    <location>
        <position position="700"/>
    </location>
</feature>
<feature type="glycosylation site" description="N-linked (GlcNAc...) asparagine" evidence="2">
    <location>
        <position position="704"/>
    </location>
</feature>
<feature type="glycosylation site" description="N-linked (GlcNAc...) asparagine" evidence="2">
    <location>
        <position position="837"/>
    </location>
</feature>
<feature type="splice variant" id="VSP_015830" description="In isoform 2." evidence="6">
    <original>AHSKVWHNYDKNFRPHQKGW</original>
    <variation>VLYSWLLTRASELGGGVLGG</variation>
    <location>
        <begin position="276"/>
        <end position="295"/>
    </location>
</feature>
<feature type="splice variant" id="VSP_015831" description="In isoform 2." evidence="6">
    <location>
        <begin position="296"/>
        <end position="1043"/>
    </location>
</feature>
<name>KLOTB_MOUSE</name>
<accession>Q99N32</accession>
<accession>B2RQN8</accession>
<accession>Q920J2</accession>
<accession>Q99N31</accession>
<protein>
    <recommendedName>
        <fullName>Beta-klotho</fullName>
        <shortName>BKL</shortName>
        <shortName>BetaKlotho</shortName>
    </recommendedName>
    <alternativeName>
        <fullName>Klotho beta-like protein</fullName>
    </alternativeName>
</protein>
<keyword id="KW-0025">Alternative splicing</keyword>
<keyword id="KW-1003">Cell membrane</keyword>
<keyword id="KW-0325">Glycoprotein</keyword>
<keyword id="KW-0472">Membrane</keyword>
<keyword id="KW-1185">Reference proteome</keyword>
<keyword id="KW-0677">Repeat</keyword>
<keyword id="KW-0812">Transmembrane</keyword>
<keyword id="KW-1133">Transmembrane helix</keyword>
<dbReference type="EMBL" id="AF178429">
    <property type="protein sequence ID" value="AAL01648.1"/>
    <property type="status" value="ALT_INIT"/>
    <property type="molecule type" value="mRNA"/>
</dbReference>
<dbReference type="EMBL" id="AF165170">
    <property type="protein sequence ID" value="AAK28704.1"/>
    <property type="molecule type" value="mRNA"/>
</dbReference>
<dbReference type="EMBL" id="AF165171">
    <property type="protein sequence ID" value="AAK28705.1"/>
    <property type="molecule type" value="mRNA"/>
</dbReference>
<dbReference type="EMBL" id="BC138008">
    <property type="protein sequence ID" value="AAI38009.1"/>
    <property type="molecule type" value="mRNA"/>
</dbReference>
<dbReference type="EMBL" id="BC138010">
    <property type="protein sequence ID" value="AAI38011.1"/>
    <property type="molecule type" value="mRNA"/>
</dbReference>
<dbReference type="CCDS" id="CCDS19306.1">
    <molecule id="Q99N32-1"/>
</dbReference>
<dbReference type="RefSeq" id="NP_112457.1">
    <molecule id="Q99N32-1"/>
    <property type="nucleotide sequence ID" value="NM_031180.3"/>
</dbReference>
<dbReference type="SMR" id="Q99N32"/>
<dbReference type="BioGRID" id="219908">
    <property type="interactions" value="4"/>
</dbReference>
<dbReference type="DIP" id="DIP-60918N"/>
<dbReference type="FunCoup" id="Q99N32">
    <property type="interactions" value="451"/>
</dbReference>
<dbReference type="IntAct" id="Q99N32">
    <property type="interactions" value="2"/>
</dbReference>
<dbReference type="STRING" id="10090.ENSMUSP00000031096"/>
<dbReference type="CAZy" id="GH1">
    <property type="family name" value="Glycoside Hydrolase Family 1"/>
</dbReference>
<dbReference type="GlyCosmos" id="Q99N32">
    <property type="glycosylation" value="12 sites, No reported glycans"/>
</dbReference>
<dbReference type="GlyGen" id="Q99N32">
    <property type="glycosylation" value="13 sites"/>
</dbReference>
<dbReference type="iPTMnet" id="Q99N32"/>
<dbReference type="PhosphoSitePlus" id="Q99N32"/>
<dbReference type="PaxDb" id="10090-ENSMUSP00000031096"/>
<dbReference type="ProteomicsDB" id="263663">
    <molecule id="Q99N32-1"/>
</dbReference>
<dbReference type="ProteomicsDB" id="263664">
    <molecule id="Q99N32-2"/>
</dbReference>
<dbReference type="Antibodypedia" id="10542">
    <property type="antibodies" value="210 antibodies from 23 providers"/>
</dbReference>
<dbReference type="DNASU" id="83379"/>
<dbReference type="Ensembl" id="ENSMUST00000031096.11">
    <molecule id="Q99N32-1"/>
    <property type="protein sequence ID" value="ENSMUSP00000031096.8"/>
    <property type="gene ID" value="ENSMUSG00000029195.11"/>
</dbReference>
<dbReference type="GeneID" id="83379"/>
<dbReference type="KEGG" id="mmu:83379"/>
<dbReference type="UCSC" id="uc008xnn.1">
    <molecule id="Q99N32-1"/>
    <property type="organism name" value="mouse"/>
</dbReference>
<dbReference type="AGR" id="MGI:1932466"/>
<dbReference type="CTD" id="152831"/>
<dbReference type="MGI" id="MGI:1932466">
    <property type="gene designation" value="Klb"/>
</dbReference>
<dbReference type="VEuPathDB" id="HostDB:ENSMUSG00000029195"/>
<dbReference type="eggNOG" id="KOG0626">
    <property type="taxonomic scope" value="Eukaryota"/>
</dbReference>
<dbReference type="GeneTree" id="ENSGT00940000157489"/>
<dbReference type="HOGENOM" id="CLU_001859_5_2_1"/>
<dbReference type="InParanoid" id="Q99N32"/>
<dbReference type="OMA" id="RRKFWKA"/>
<dbReference type="OrthoDB" id="65569at2759"/>
<dbReference type="PhylomeDB" id="Q99N32"/>
<dbReference type="TreeFam" id="TF314803"/>
<dbReference type="Reactome" id="R-MMU-109704">
    <property type="pathway name" value="PI3K Cascade"/>
</dbReference>
<dbReference type="Reactome" id="R-MMU-1257604">
    <property type="pathway name" value="PIP3 activates AKT signaling"/>
</dbReference>
<dbReference type="Reactome" id="R-MMU-1307965">
    <property type="pathway name" value="betaKlotho-mediated ligand binding"/>
</dbReference>
<dbReference type="Reactome" id="R-MMU-5654228">
    <property type="pathway name" value="Phospholipase C-mediated cascade, FGFR4"/>
</dbReference>
<dbReference type="Reactome" id="R-MMU-5654712">
    <property type="pathway name" value="FRS-mediated FGFR4 signaling"/>
</dbReference>
<dbReference type="Reactome" id="R-MMU-5654719">
    <property type="pathway name" value="SHC-mediated cascade:FGFR4"/>
</dbReference>
<dbReference type="Reactome" id="R-MMU-5654720">
    <property type="pathway name" value="PI-3K cascade:FGFR4"/>
</dbReference>
<dbReference type="Reactome" id="R-MMU-5654733">
    <property type="pathway name" value="Negative regulation of FGFR4 signaling"/>
</dbReference>
<dbReference type="Reactome" id="R-MMU-5673001">
    <property type="pathway name" value="RAF/MAP kinase cascade"/>
</dbReference>
<dbReference type="Reactome" id="R-MMU-6811558">
    <property type="pathway name" value="PI5P, PP2A and IER3 Regulate PI3K/AKT Signaling"/>
</dbReference>
<dbReference type="BioGRID-ORCS" id="83379">
    <property type="hits" value="6 hits in 76 CRISPR screens"/>
</dbReference>
<dbReference type="ChiTaRS" id="Klb">
    <property type="organism name" value="mouse"/>
</dbReference>
<dbReference type="PRO" id="PR:Q99N32"/>
<dbReference type="Proteomes" id="UP000000589">
    <property type="component" value="Chromosome 5"/>
</dbReference>
<dbReference type="RNAct" id="Q99N32">
    <property type="molecule type" value="protein"/>
</dbReference>
<dbReference type="Bgee" id="ENSMUSG00000029195">
    <property type="expression patterns" value="Expressed in brown adipose tissue and 66 other cell types or tissues"/>
</dbReference>
<dbReference type="ExpressionAtlas" id="Q99N32">
    <property type="expression patterns" value="baseline and differential"/>
</dbReference>
<dbReference type="GO" id="GO:0016020">
    <property type="term" value="C:membrane"/>
    <property type="evidence" value="ECO:0000250"/>
    <property type="project" value="MGI"/>
</dbReference>
<dbReference type="GO" id="GO:0005886">
    <property type="term" value="C:plasma membrane"/>
    <property type="evidence" value="ECO:0007669"/>
    <property type="project" value="UniProtKB-SubCell"/>
</dbReference>
<dbReference type="GO" id="GO:0017134">
    <property type="term" value="F:fibroblast growth factor binding"/>
    <property type="evidence" value="ECO:0007669"/>
    <property type="project" value="Ensembl"/>
</dbReference>
<dbReference type="GO" id="GO:0005104">
    <property type="term" value="F:fibroblast growth factor receptor binding"/>
    <property type="evidence" value="ECO:0007669"/>
    <property type="project" value="Ensembl"/>
</dbReference>
<dbReference type="GO" id="GO:0004553">
    <property type="term" value="F:hydrolase activity, hydrolyzing O-glycosyl compounds"/>
    <property type="evidence" value="ECO:0007669"/>
    <property type="project" value="InterPro"/>
</dbReference>
<dbReference type="GO" id="GO:0005975">
    <property type="term" value="P:carbohydrate metabolic process"/>
    <property type="evidence" value="ECO:0007669"/>
    <property type="project" value="InterPro"/>
</dbReference>
<dbReference type="GO" id="GO:0008543">
    <property type="term" value="P:fibroblast growth factor receptor signaling pathway"/>
    <property type="evidence" value="ECO:0000316"/>
    <property type="project" value="MGI"/>
</dbReference>
<dbReference type="GO" id="GO:0008284">
    <property type="term" value="P:positive regulation of cell population proliferation"/>
    <property type="evidence" value="ECO:0000316"/>
    <property type="project" value="MGI"/>
</dbReference>
<dbReference type="GO" id="GO:0090080">
    <property type="term" value="P:positive regulation of MAPKKK cascade by fibroblast growth factor receptor signaling pathway"/>
    <property type="evidence" value="ECO:0000316"/>
    <property type="project" value="MGI"/>
</dbReference>
<dbReference type="FunFam" id="3.20.20.80:FF:000042">
    <property type="entry name" value="Klotho"/>
    <property type="match status" value="1"/>
</dbReference>
<dbReference type="FunFam" id="3.20.20.80:FF:000062">
    <property type="entry name" value="Klotho"/>
    <property type="match status" value="1"/>
</dbReference>
<dbReference type="Gene3D" id="3.20.20.80">
    <property type="entry name" value="Glycosidases"/>
    <property type="match status" value="2"/>
</dbReference>
<dbReference type="InterPro" id="IPR001360">
    <property type="entry name" value="Glyco_hydro_1"/>
</dbReference>
<dbReference type="InterPro" id="IPR033132">
    <property type="entry name" value="Glyco_hydro_1_N_CS"/>
</dbReference>
<dbReference type="InterPro" id="IPR017853">
    <property type="entry name" value="Glycoside_hydrolase_SF"/>
</dbReference>
<dbReference type="PANTHER" id="PTHR10353:SF68">
    <property type="entry name" value="BETA-KLOTHO"/>
    <property type="match status" value="1"/>
</dbReference>
<dbReference type="PANTHER" id="PTHR10353">
    <property type="entry name" value="GLYCOSYL HYDROLASE"/>
    <property type="match status" value="1"/>
</dbReference>
<dbReference type="Pfam" id="PF00232">
    <property type="entry name" value="Glyco_hydro_1"/>
    <property type="match status" value="2"/>
</dbReference>
<dbReference type="PRINTS" id="PR00131">
    <property type="entry name" value="GLHYDRLASE1"/>
</dbReference>
<dbReference type="SUPFAM" id="SSF51445">
    <property type="entry name" value="(Trans)glycosidases"/>
    <property type="match status" value="2"/>
</dbReference>
<dbReference type="PROSITE" id="PS00653">
    <property type="entry name" value="GLYCOSYL_HYDROL_F1_2"/>
    <property type="match status" value="1"/>
</dbReference>
<comment type="function">
    <text evidence="4 5">Contributes to the transcriptional repression of cholesterol 7-alpha-hydroxylase (CYP7A1), the rate-limiting enzyme in bile acid synthesis. Probably inactive as a glycosidase. Increases the ability of FGFR1 and FGFR4 to bind FGF21.</text>
</comment>
<comment type="subunit">
    <text evidence="1 5">Interacts with FGF19; this interaction is direct. Interacts (via C-terminus) with FGF21; this interaction is direct (By similarity). Interacts with FGFR1 and FGFR4.</text>
</comment>
<comment type="interaction">
    <interactant intactId="EBI-15633521">
        <id>Q99N32</id>
    </interactant>
    <interactant intactId="EBI-7953898">
        <id>P16092</id>
        <label>Fgfr1</label>
    </interactant>
    <organismsDiffer>false</organismsDiffer>
    <experiments>3</experiments>
</comment>
<comment type="interaction">
    <interactant intactId="EBI-15633521">
        <id>Q99N32</id>
    </interactant>
    <interactant intactId="EBI-15633599">
        <id>Q03142</id>
        <label>Fgfr4</label>
    </interactant>
    <organismsDiffer>false</organismsDiffer>
    <experiments>2</experiments>
</comment>
<comment type="subcellular location">
    <subcellularLocation>
        <location evidence="7">Cell membrane</location>
        <topology evidence="7">Single-pass type III membrane protein</topology>
    </subcellularLocation>
</comment>
<comment type="alternative products">
    <event type="alternative splicing"/>
    <isoform>
        <id>Q99N32-1</id>
        <name>1</name>
        <sequence type="displayed"/>
    </isoform>
    <isoform>
        <id>Q99N32-2</id>
        <name>2</name>
        <sequence type="described" ref="VSP_015830 VSP_015831"/>
    </isoform>
</comment>
<comment type="tissue specificity">
    <text evidence="3 4 5">Present in liver, muscle and white adipose tissue, but not in kidney (at protein level). Expressed in liver and pancreas, and at lower levels in skin, stomach, skeletal muscle, small intestine and lung.</text>
</comment>
<comment type="developmental stage">
    <text evidence="3 5">Expression starts at 10.5 dpc in hepatocytes. Expressed in the acinar cells of the pancreas and cervical brown adipose tissue at 15.5 dpc. Expressed in white adipose tissue at 19.5 dpc. Up-regulated during preadipocyte differentiation into adipocytes (at protein level).</text>
</comment>
<comment type="domain">
    <text>Contains 2 glycosyl hydrolase 1 regions. However, the first region lacks the essential Glu active site residue at position 241, and the second one lacks the essential Glu active site residue at position 887. These domains are therefore predicted to be inactive.</text>
</comment>
<comment type="disruption phenotype">
    <text evidence="4">Mice are viable and fertile, but have an altered bile metabolism: they have increased CYP7A1 levels, secrete more bile acids and are resistant to cholesterol gallstone formation.</text>
</comment>
<comment type="similarity">
    <text evidence="7">Belongs to the glycosyl hydrolase 1 family. Klotho subfamily.</text>
</comment>
<comment type="sequence caution" evidence="7">
    <conflict type="erroneous initiation">
        <sequence resource="EMBL-CDS" id="AAL01648"/>
    </conflict>
</comment>
<reference key="1">
    <citation type="journal article" date="2000" name="Mech. Dev.">
        <title>Molecular cloning and expression analyses of mouse betaklotho, which encodes a novel Klotho family protein.</title>
        <authorList>
            <person name="Ito S."/>
            <person name="Kinoshita S."/>
            <person name="Shiraishi N."/>
            <person name="Nakagawa S."/>
            <person name="Sekine S."/>
            <person name="Fujimori T."/>
            <person name="Nabeshima Y."/>
        </authorList>
    </citation>
    <scope>NUCLEOTIDE SEQUENCE [MRNA] (ISOFORMS 1 AND 2)</scope>
    <scope>TISSUE SPECIFICITY</scope>
    <scope>DEVELOPMENTAL STAGE</scope>
    <source>
        <strain>Swiss Webster</strain>
        <tissue>Liver</tissue>
    </source>
</reference>
<reference key="2">
    <citation type="journal article" date="2004" name="Genome Res.">
        <title>The status, quality, and expansion of the NIH full-length cDNA project: the Mammalian Gene Collection (MGC).</title>
        <authorList>
            <consortium name="The MGC Project Team"/>
        </authorList>
    </citation>
    <scope>NUCLEOTIDE SEQUENCE [LARGE SCALE MRNA] (ISOFORM 1)</scope>
    <source>
        <tissue>Brain</tissue>
    </source>
</reference>
<reference key="3">
    <citation type="journal article" date="2005" name="J. Clin. Invest.">
        <title>Impaired negative feedback suppression of bile acid synthesis in mice lacking betaKlotho.</title>
        <authorList>
            <person name="Ito S."/>
            <person name="Fujimori T."/>
            <person name="Furuya A."/>
            <person name="Satoh J."/>
            <person name="Nabeshima Y."/>
            <person name="Nabeshima Y."/>
        </authorList>
    </citation>
    <scope>FUNCTION</scope>
    <scope>TISSUE SPECIFICITY</scope>
    <scope>DISRUPTION PHENOTYPE</scope>
</reference>
<reference key="4">
    <citation type="journal article" date="2007" name="Proc. Natl. Acad. Sci. U.S.A.">
        <title>BetaKlotho is required for metabolic activity of fibroblast growth factor 21.</title>
        <authorList>
            <person name="Ogawa Y."/>
            <person name="Kurosu H."/>
            <person name="Yamamoto M."/>
            <person name="Nandi A."/>
            <person name="Rosenblatt K.P."/>
            <person name="Goetz R."/>
            <person name="Eliseenkova A.V."/>
            <person name="Mohammadi M."/>
            <person name="Kuro-o M."/>
        </authorList>
    </citation>
    <scope>FUNCTION</scope>
    <scope>TISSUE SPECIFICITY</scope>
    <scope>DEVELOPMENTAL STAGE</scope>
    <scope>INTERACTION WITH FGFR1 AND FGFR4</scope>
</reference>
<gene>
    <name type="primary">Klb</name>
    <name type="synonym">Betakl</name>
</gene>